<keyword id="KW-0030">Aminoacyl-tRNA synthetase</keyword>
<keyword id="KW-0067">ATP-binding</keyword>
<keyword id="KW-0963">Cytoplasm</keyword>
<keyword id="KW-0436">Ligase</keyword>
<keyword id="KW-0547">Nucleotide-binding</keyword>
<keyword id="KW-0648">Protein biosynthesis</keyword>
<keyword id="KW-1185">Reference proteome</keyword>
<organism>
    <name type="scientific">Streptococcus pneumoniae serotype 4 (strain ATCC BAA-334 / TIGR4)</name>
    <dbReference type="NCBI Taxonomy" id="170187"/>
    <lineage>
        <taxon>Bacteria</taxon>
        <taxon>Bacillati</taxon>
        <taxon>Bacillota</taxon>
        <taxon>Bacilli</taxon>
        <taxon>Lactobacillales</taxon>
        <taxon>Streptococcaceae</taxon>
        <taxon>Streptococcus</taxon>
    </lineage>
</organism>
<evidence type="ECO:0000255" key="1">
    <source>
        <dbReference type="HAMAP-Rule" id="MF_00049"/>
    </source>
</evidence>
<gene>
    <name evidence="1" type="primary">leuS</name>
    <name type="ordered locus">SP_0254</name>
</gene>
<name>SYL_STRPN</name>
<protein>
    <recommendedName>
        <fullName evidence="1">Leucine--tRNA ligase</fullName>
        <ecNumber evidence="1">6.1.1.4</ecNumber>
    </recommendedName>
    <alternativeName>
        <fullName evidence="1">Leucyl-tRNA synthetase</fullName>
        <shortName evidence="1">LeuRS</shortName>
    </alternativeName>
</protein>
<comment type="catalytic activity">
    <reaction evidence="1">
        <text>tRNA(Leu) + L-leucine + ATP = L-leucyl-tRNA(Leu) + AMP + diphosphate</text>
        <dbReference type="Rhea" id="RHEA:11688"/>
        <dbReference type="Rhea" id="RHEA-COMP:9613"/>
        <dbReference type="Rhea" id="RHEA-COMP:9622"/>
        <dbReference type="ChEBI" id="CHEBI:30616"/>
        <dbReference type="ChEBI" id="CHEBI:33019"/>
        <dbReference type="ChEBI" id="CHEBI:57427"/>
        <dbReference type="ChEBI" id="CHEBI:78442"/>
        <dbReference type="ChEBI" id="CHEBI:78494"/>
        <dbReference type="ChEBI" id="CHEBI:456215"/>
        <dbReference type="EC" id="6.1.1.4"/>
    </reaction>
</comment>
<comment type="subcellular location">
    <subcellularLocation>
        <location evidence="1">Cytoplasm</location>
    </subcellularLocation>
</comment>
<comment type="similarity">
    <text evidence="1">Belongs to the class-I aminoacyl-tRNA synthetase family.</text>
</comment>
<reference key="1">
    <citation type="journal article" date="2001" name="Science">
        <title>Complete genome sequence of a virulent isolate of Streptococcus pneumoniae.</title>
        <authorList>
            <person name="Tettelin H."/>
            <person name="Nelson K.E."/>
            <person name="Paulsen I.T."/>
            <person name="Eisen J.A."/>
            <person name="Read T.D."/>
            <person name="Peterson S.N."/>
            <person name="Heidelberg J.F."/>
            <person name="DeBoy R.T."/>
            <person name="Haft D.H."/>
            <person name="Dodson R.J."/>
            <person name="Durkin A.S."/>
            <person name="Gwinn M.L."/>
            <person name="Kolonay J.F."/>
            <person name="Nelson W.C."/>
            <person name="Peterson J.D."/>
            <person name="Umayam L.A."/>
            <person name="White O."/>
            <person name="Salzberg S.L."/>
            <person name="Lewis M.R."/>
            <person name="Radune D."/>
            <person name="Holtzapple E.K."/>
            <person name="Khouri H.M."/>
            <person name="Wolf A.M."/>
            <person name="Utterback T.R."/>
            <person name="Hansen C.L."/>
            <person name="McDonald L.A."/>
            <person name="Feldblyum T.V."/>
            <person name="Angiuoli S.V."/>
            <person name="Dickinson T."/>
            <person name="Hickey E.K."/>
            <person name="Holt I.E."/>
            <person name="Loftus B.J."/>
            <person name="Yang F."/>
            <person name="Smith H.O."/>
            <person name="Venter J.C."/>
            <person name="Dougherty B.A."/>
            <person name="Morrison D.A."/>
            <person name="Hollingshead S.K."/>
            <person name="Fraser C.M."/>
        </authorList>
    </citation>
    <scope>NUCLEOTIDE SEQUENCE [LARGE SCALE GENOMIC DNA]</scope>
    <source>
        <strain>ATCC BAA-334 / TIGR4</strain>
    </source>
</reference>
<sequence length="833" mass="94422">MSFYNHKEIEPKWQGYWAEHHTFKTGTDTSKPKFYALDMFPYPSGAGLHVGHPEGYTATDILSRYKRAQGYNVLHPMGWDAFGLPAEQYAMDTGNDPAEFTAENIANFKRQINALGFSYDWDREVNTTDPNYYKWTQWIFTKLYEKGLAYEAEVPVNWVEELGTAIANEEVLPDGTSERGGYPVVRKPMRQWMLKITAYAERLLNDLDELDWSESIKDMQRNWIGKSTGANVTFKVKGTDKEFTVFTTRPDTLFGATFTVLAPEHELVDAITSSEQAEAVADYKHQASLKSDLARTDLAKEKTGVWTGAYAINPVNGKEMPIWIADYVLASYGTGAVMAVPAHDQRDWEFAKQFDLPIVEVLEGGNVEEAAYTEDGLHVNSDFLDGLNKEDAIAKIVAWLEEKGCGQEKVTYRLRDWLFSRQRYWGEPIPIIHWEDGTSTAVPETELPLVLPVTKDIRPSGTGESPLANLTDWLEVTREDGVKGRRETNTMPQWAGSSWYYLRYIDPHNTEKLADEDLLKQWLPVDIYVGGAEHAVLHLLYARFWHKFLYDLGVVPTKEPFQKLFNQGMILGTSYRDHRGALVATDKVEKRDGSFFHVETGEELEQAPAKMSKSLKNVVNPDDVVEQYGADTLRVYEMFMGPLDASIAWSEEGLEGSRKFLDRVYRLITSKEILAENNGALDKVYNETVKAVTEQIESLKFNTAIAQLMVFVNAANKEDKLYVDYAKGFIQLIAPFAPHLAEELWQTVAETGESISYVAWPTWDESKLVEDEIEIVVQIKGKVRAKLMVAKDLSREELQEIALADEKVKAEIDGKEIVKVIAVPNKLVNIVVK</sequence>
<accession>Q97SS0</accession>
<feature type="chain" id="PRO_0000152095" description="Leucine--tRNA ligase">
    <location>
        <begin position="1"/>
        <end position="833"/>
    </location>
</feature>
<feature type="short sequence motif" description="'HIGH' region">
    <location>
        <begin position="41"/>
        <end position="52"/>
    </location>
</feature>
<feature type="short sequence motif" description="'KMSKS' region">
    <location>
        <begin position="610"/>
        <end position="614"/>
    </location>
</feature>
<feature type="binding site" evidence="1">
    <location>
        <position position="613"/>
    </location>
    <ligand>
        <name>ATP</name>
        <dbReference type="ChEBI" id="CHEBI:30616"/>
    </ligand>
</feature>
<proteinExistence type="inferred from homology"/>
<dbReference type="EC" id="6.1.1.4" evidence="1"/>
<dbReference type="EMBL" id="AE005672">
    <property type="protein sequence ID" value="AAK74433.1"/>
    <property type="molecule type" value="Genomic_DNA"/>
</dbReference>
<dbReference type="PIR" id="H95029">
    <property type="entry name" value="H95029"/>
</dbReference>
<dbReference type="RefSeq" id="WP_000011793.1">
    <property type="nucleotide sequence ID" value="NC_003028.3"/>
</dbReference>
<dbReference type="SMR" id="Q97SS0"/>
<dbReference type="PaxDb" id="170187-SP_0254"/>
<dbReference type="EnsemblBacteria" id="AAK74433">
    <property type="protein sequence ID" value="AAK74433"/>
    <property type="gene ID" value="SP_0254"/>
</dbReference>
<dbReference type="KEGG" id="spn:SP_0254"/>
<dbReference type="eggNOG" id="COG0495">
    <property type="taxonomic scope" value="Bacteria"/>
</dbReference>
<dbReference type="PhylomeDB" id="Q97SS0"/>
<dbReference type="BioCyc" id="SPNE170187:G1FZB-260-MONOMER"/>
<dbReference type="Proteomes" id="UP000000585">
    <property type="component" value="Chromosome"/>
</dbReference>
<dbReference type="GO" id="GO:0005829">
    <property type="term" value="C:cytosol"/>
    <property type="evidence" value="ECO:0007669"/>
    <property type="project" value="TreeGrafter"/>
</dbReference>
<dbReference type="GO" id="GO:0002161">
    <property type="term" value="F:aminoacyl-tRNA deacylase activity"/>
    <property type="evidence" value="ECO:0007669"/>
    <property type="project" value="InterPro"/>
</dbReference>
<dbReference type="GO" id="GO:0005524">
    <property type="term" value="F:ATP binding"/>
    <property type="evidence" value="ECO:0007669"/>
    <property type="project" value="UniProtKB-UniRule"/>
</dbReference>
<dbReference type="GO" id="GO:0004823">
    <property type="term" value="F:leucine-tRNA ligase activity"/>
    <property type="evidence" value="ECO:0007669"/>
    <property type="project" value="UniProtKB-UniRule"/>
</dbReference>
<dbReference type="GO" id="GO:0006429">
    <property type="term" value="P:leucyl-tRNA aminoacylation"/>
    <property type="evidence" value="ECO:0007669"/>
    <property type="project" value="UniProtKB-UniRule"/>
</dbReference>
<dbReference type="CDD" id="cd07958">
    <property type="entry name" value="Anticodon_Ia_Leu_BEm"/>
    <property type="match status" value="1"/>
</dbReference>
<dbReference type="CDD" id="cd00812">
    <property type="entry name" value="LeuRS_core"/>
    <property type="match status" value="1"/>
</dbReference>
<dbReference type="FunFam" id="1.10.730.10:FF:000012">
    <property type="entry name" value="Leucine--tRNA ligase"/>
    <property type="match status" value="1"/>
</dbReference>
<dbReference type="FunFam" id="3.40.50.620:FF:000056">
    <property type="entry name" value="Leucine--tRNA ligase"/>
    <property type="match status" value="1"/>
</dbReference>
<dbReference type="FunFam" id="3.40.50.620:FF:000077">
    <property type="entry name" value="Leucine--tRNA ligase"/>
    <property type="match status" value="1"/>
</dbReference>
<dbReference type="FunFam" id="1.10.730.10:FF:000011">
    <property type="entry name" value="Leucine--tRNA ligase chloroplastic/mitochondrial"/>
    <property type="match status" value="1"/>
</dbReference>
<dbReference type="Gene3D" id="3.40.50.620">
    <property type="entry name" value="HUPs"/>
    <property type="match status" value="2"/>
</dbReference>
<dbReference type="Gene3D" id="1.10.730.10">
    <property type="entry name" value="Isoleucyl-tRNA Synthetase, Domain 1"/>
    <property type="match status" value="1"/>
</dbReference>
<dbReference type="Gene3D" id="3.90.740.10">
    <property type="entry name" value="Valyl/Leucyl/Isoleucyl-tRNA synthetase, editing domain"/>
    <property type="match status" value="1"/>
</dbReference>
<dbReference type="HAMAP" id="MF_00049_B">
    <property type="entry name" value="Leu_tRNA_synth_B"/>
    <property type="match status" value="1"/>
</dbReference>
<dbReference type="InterPro" id="IPR001412">
    <property type="entry name" value="aa-tRNA-synth_I_CS"/>
</dbReference>
<dbReference type="InterPro" id="IPR002300">
    <property type="entry name" value="aa-tRNA-synth_Ia"/>
</dbReference>
<dbReference type="InterPro" id="IPR002302">
    <property type="entry name" value="Leu-tRNA-ligase"/>
</dbReference>
<dbReference type="InterPro" id="IPR025709">
    <property type="entry name" value="Leu_tRNA-synth_edit"/>
</dbReference>
<dbReference type="InterPro" id="IPR013155">
    <property type="entry name" value="M/V/L/I-tRNA-synth_anticd-bd"/>
</dbReference>
<dbReference type="InterPro" id="IPR015413">
    <property type="entry name" value="Methionyl/Leucyl_tRNA_Synth"/>
</dbReference>
<dbReference type="InterPro" id="IPR014729">
    <property type="entry name" value="Rossmann-like_a/b/a_fold"/>
</dbReference>
<dbReference type="InterPro" id="IPR009080">
    <property type="entry name" value="tRNAsynth_Ia_anticodon-bd"/>
</dbReference>
<dbReference type="InterPro" id="IPR009008">
    <property type="entry name" value="Val/Leu/Ile-tRNA-synth_edit"/>
</dbReference>
<dbReference type="NCBIfam" id="TIGR00396">
    <property type="entry name" value="leuS_bact"/>
    <property type="match status" value="1"/>
</dbReference>
<dbReference type="PANTHER" id="PTHR43740:SF2">
    <property type="entry name" value="LEUCINE--TRNA LIGASE, MITOCHONDRIAL"/>
    <property type="match status" value="1"/>
</dbReference>
<dbReference type="PANTHER" id="PTHR43740">
    <property type="entry name" value="LEUCYL-TRNA SYNTHETASE"/>
    <property type="match status" value="1"/>
</dbReference>
<dbReference type="Pfam" id="PF08264">
    <property type="entry name" value="Anticodon_1"/>
    <property type="match status" value="1"/>
</dbReference>
<dbReference type="Pfam" id="PF00133">
    <property type="entry name" value="tRNA-synt_1"/>
    <property type="match status" value="2"/>
</dbReference>
<dbReference type="Pfam" id="PF13603">
    <property type="entry name" value="tRNA-synt_1_2"/>
    <property type="match status" value="1"/>
</dbReference>
<dbReference type="Pfam" id="PF09334">
    <property type="entry name" value="tRNA-synt_1g"/>
    <property type="match status" value="1"/>
</dbReference>
<dbReference type="PRINTS" id="PR00985">
    <property type="entry name" value="TRNASYNTHLEU"/>
</dbReference>
<dbReference type="SUPFAM" id="SSF47323">
    <property type="entry name" value="Anticodon-binding domain of a subclass of class I aminoacyl-tRNA synthetases"/>
    <property type="match status" value="1"/>
</dbReference>
<dbReference type="SUPFAM" id="SSF52374">
    <property type="entry name" value="Nucleotidylyl transferase"/>
    <property type="match status" value="1"/>
</dbReference>
<dbReference type="SUPFAM" id="SSF50677">
    <property type="entry name" value="ValRS/IleRS/LeuRS editing domain"/>
    <property type="match status" value="1"/>
</dbReference>
<dbReference type="PROSITE" id="PS00178">
    <property type="entry name" value="AA_TRNA_LIGASE_I"/>
    <property type="match status" value="1"/>
</dbReference>